<comment type="function">
    <text evidence="1 4 8 9 12 13">E3 ubiquitin-protein ligase involved in Golgi membrane fusion and regulation of small GTPases (PubMed:15254018, PubMed:21988917, PubMed:22036506, PubMed:37537642, PubMed:38332367). Acts as a regulator of Golgi membrane dynamics during the cell cycle: recruited to Golgi membrane by Rab proteins and regulates postmitotic Golgi membrane fusion (PubMed:21988917). Acts by mediating ubiquitination during mitotic Golgi disassembly, ubiquitination serving as a signal for Golgi reassembly later, after cell division (PubMed:21988917). Specifically binds GTP-bound RAC1, mediating ubiquitination and subsequent degradation of active RAC1, thereby playing a role in host defense against pathogens (PubMed:22036506, PubMed:37537642, PubMed:38332367). May also act as a transcription regulator via its interaction with RARB (By similarity).</text>
</comment>
<comment type="catalytic activity">
    <reaction evidence="12 13">
        <text>S-ubiquitinyl-[E2 ubiquitin-conjugating enzyme]-L-cysteine + [acceptor protein]-L-lysine = [E2 ubiquitin-conjugating enzyme]-L-cysteine + N(6)-ubiquitinyl-[acceptor protein]-L-lysine.</text>
        <dbReference type="EC" id="2.3.2.26"/>
    </reaction>
</comment>
<comment type="activity regulation">
    <text evidence="12 13">Sterically autoinhibited in its dimeric state.</text>
</comment>
<comment type="pathway">
    <text evidence="12 13">Protein modification; protein ubiquitination.</text>
</comment>
<comment type="subunit">
    <text evidence="1 4 8 12 13">Homodimer (PubMed:37537642, PubMed:38332367). The homodimer is autoinhibited and stabilized by its N-terminal helix (PubMed:37537642, PubMed:38332367). Interacts with RAB1 (RAB1A, RAB1B or RAB1C), RAB4 (RAB4A or RAB4B) and RAB11 (RAB11A or RAB11B); in a GTP-dependent manner (PubMed:21988917). Interacts with the 26S proteasomal complex through the 20S core proteasomal subunit (PubMed:15254018). Interacts with RARB (By similarity).</text>
</comment>
<comment type="interaction">
    <interactant intactId="EBI-308277">
        <id>Q8IYU2</id>
    </interactant>
    <interactant intactId="EBI-748974">
        <id>Q96CV9</id>
        <label>OPTN</label>
    </interactant>
    <organismsDiffer>false</organismsDiffer>
    <experiments>15</experiments>
</comment>
<comment type="interaction">
    <interactant intactId="EBI-308277">
        <id>Q8IYU2</id>
    </interactant>
    <interactant intactId="EBI-722284">
        <id>P20338</id>
        <label>RAB4A</label>
    </interactant>
    <organismsDiffer>false</organismsDiffer>
    <experiments>3</experiments>
</comment>
<comment type="interaction">
    <interactant intactId="EBI-308277">
        <id>Q8IYU2</id>
    </interactant>
    <interactant intactId="EBI-413628">
        <id>P63000</id>
        <label>RAC1</label>
    </interactant>
    <organismsDiffer>false</organismsDiffer>
    <experiments>5</experiments>
</comment>
<comment type="subcellular location">
    <subcellularLocation>
        <location evidence="8">Golgi apparatus</location>
        <location evidence="8">Golgi stack membrane</location>
    </subcellularLocation>
    <subcellularLocation>
        <location evidence="8">Cytoplasm</location>
    </subcellularLocation>
    <subcellularLocation>
        <location evidence="8">Endoplasmic reticulum</location>
    </subcellularLocation>
    <text evidence="8">A significant portion localizes to the endoplasmic reticulum. Targeted to Golgi membrane via its interaction with Rab proteins.</text>
</comment>
<comment type="alternative products">
    <event type="alternative splicing"/>
    <isoform>
        <id>Q8IYU2-1</id>
        <name>1</name>
        <sequence type="displayed"/>
    </isoform>
    <isoform>
        <id>Q8IYU2-2</id>
        <name>2</name>
        <sequence type="described" ref="VSP_023829"/>
    </isoform>
    <isoform>
        <id>Q8IYU2-3</id>
        <name>3</name>
        <sequence type="described" ref="VSP_023830 VSP_023831"/>
    </isoform>
    <isoform>
        <id>Q8IYU2-4</id>
        <name>4</name>
        <sequence type="described" ref="VSP_042378"/>
    </isoform>
</comment>
<comment type="tissue specificity">
    <text evidence="4">Expressed in multiple tissues including heart, brain and kidney.</text>
</comment>
<comment type="developmental stage">
    <text evidence="4">Expressed in fetal and pediatric kidney cells.</text>
</comment>
<comment type="induction">
    <text evidence="4 6">Down-regulated in sporadic Wilms tumor.</text>
</comment>
<comment type="domain">
    <text evidence="12 13">The N-terminal lobe of the HECT domain is important for interaction with E2 ubiquitin-conjugating enzymes.</text>
</comment>
<comment type="domain">
    <text evidence="13">The ANK repeats ANK 3, ANK 4 and ANK 5 are important for recognizing the RAC1 substrate.</text>
</comment>
<comment type="PTM">
    <text evidence="12 13">Autoubiquitinated.</text>
</comment>
<comment type="disease">
    <text evidence="6 7">Defects in HACE1 are a cause of Wilms tumor (WT). WT is a pediatric malignancy of kidney and one of the most common solid cancers in childhood. HACE1 is epigenetically down-regulated in sporadic Wilms tumor. Moreover, a t(5;6)(q21;q21) translocation that truncates HACE1 has been found in a child with bilateral, young-onset Wilms tumor (PubMed:19948536).</text>
</comment>
<comment type="disease" evidence="10 11">
    <disease id="DI-04637">
        <name>Spastic paraplegia and psychomotor retardation with or without seizures</name>
        <acronym>SPPRS</acronym>
        <description>A form of spastic paraplegia, a neurodegenerative disorder characterized by a slow, gradual, progressive weakness and spasticity of the lower limbs. Rate of progression and the severity of symptoms are quite variable. Initial symptoms may include difficulty with balance, weakness and stiffness in the legs, muscle spasms, and dragging the toes when walking. In some forms of the disorder, bladder symptoms (such as incontinence) may appear, or the weakness and stiffness may spread to other parts of the body. SPPRS is an autosomal recessive neurodevelopmental disorder manifesting in infancy. Affected individuals show hypotonia and psychomotor retardation. Most develop seizures.</description>
        <dbReference type="MIM" id="616756"/>
    </disease>
    <text>The disease is caused by variants affecting the gene represented in this entry.</text>
</comment>
<comment type="sequence caution" evidence="19">
    <conflict type="erroneous initiation">
        <sequence resource="EMBL-CDS" id="BAA92558"/>
    </conflict>
    <text>Extended N-terminus.</text>
</comment>
<comment type="sequence caution" evidence="19">
    <conflict type="erroneous initiation">
        <sequence resource="EMBL-CDS" id="BAG57487"/>
    </conflict>
    <text>Truncated N-terminus.</text>
</comment>
<comment type="sequence caution" evidence="19">
    <conflict type="erroneous initiation">
        <sequence resource="EMBL-CDS" id="BAG62066"/>
    </conflict>
    <text>Truncated N-terminus.</text>
</comment>
<comment type="sequence caution" evidence="19">
    <conflict type="erroneous initiation">
        <sequence resource="EMBL-CDS" id="BAH14462"/>
    </conflict>
    <text>Truncated N-terminus.</text>
</comment>
<comment type="online information" name="Atlas of Genetics and Cytogenetics in Oncology and Haematology">
    <link uri="https://atlasgeneticsoncology.org/gene/44285/HACE1"/>
</comment>
<dbReference type="EC" id="2.3.2.26" evidence="12 13"/>
<dbReference type="EMBL" id="AB037741">
    <property type="protein sequence ID" value="BAA92558.1"/>
    <property type="status" value="ALT_INIT"/>
    <property type="molecule type" value="mRNA"/>
</dbReference>
<dbReference type="EMBL" id="AL834202">
    <property type="protein sequence ID" value="CAD38890.1"/>
    <property type="molecule type" value="mRNA"/>
</dbReference>
<dbReference type="EMBL" id="AK131207">
    <property type="protein sequence ID" value="BAG54751.1"/>
    <property type="molecule type" value="mRNA"/>
</dbReference>
<dbReference type="EMBL" id="AK291760">
    <property type="protein sequence ID" value="BAF84449.1"/>
    <property type="molecule type" value="mRNA"/>
</dbReference>
<dbReference type="EMBL" id="AK294164">
    <property type="protein sequence ID" value="BAG57487.1"/>
    <property type="status" value="ALT_INIT"/>
    <property type="molecule type" value="mRNA"/>
</dbReference>
<dbReference type="EMBL" id="AK300314">
    <property type="protein sequence ID" value="BAG62066.1"/>
    <property type="status" value="ALT_INIT"/>
    <property type="molecule type" value="mRNA"/>
</dbReference>
<dbReference type="EMBL" id="AK316091">
    <property type="protein sequence ID" value="BAH14462.1"/>
    <property type="status" value="ALT_INIT"/>
    <property type="molecule type" value="mRNA"/>
</dbReference>
<dbReference type="EMBL" id="AL357315">
    <property type="status" value="NOT_ANNOTATED_CDS"/>
    <property type="molecule type" value="Genomic_DNA"/>
</dbReference>
<dbReference type="EMBL" id="AL513472">
    <property type="status" value="NOT_ANNOTATED_CDS"/>
    <property type="molecule type" value="Genomic_DNA"/>
</dbReference>
<dbReference type="EMBL" id="AL590402">
    <property type="status" value="NOT_ANNOTATED_CDS"/>
    <property type="molecule type" value="Genomic_DNA"/>
</dbReference>
<dbReference type="EMBL" id="BC034982">
    <property type="protein sequence ID" value="AAH34982.1"/>
    <property type="molecule type" value="mRNA"/>
</dbReference>
<dbReference type="CCDS" id="CCDS5050.1">
    <molecule id="Q8IYU2-1"/>
</dbReference>
<dbReference type="RefSeq" id="NP_001308009.1">
    <property type="nucleotide sequence ID" value="NM_001321080.1"/>
</dbReference>
<dbReference type="RefSeq" id="NP_001308012.1">
    <property type="nucleotide sequence ID" value="NM_001321083.1"/>
</dbReference>
<dbReference type="RefSeq" id="NP_001308013.1">
    <property type="nucleotide sequence ID" value="NM_001321084.1"/>
</dbReference>
<dbReference type="RefSeq" id="NP_065822.2">
    <molecule id="Q8IYU2-1"/>
    <property type="nucleotide sequence ID" value="NM_020771.4"/>
</dbReference>
<dbReference type="PDB" id="8H8X">
    <property type="method" value="EM"/>
    <property type="resolution" value="3.92 A"/>
    <property type="chains" value="A=1-909"/>
</dbReference>
<dbReference type="PDB" id="8HAE">
    <property type="method" value="EM"/>
    <property type="resolution" value="4.55 A"/>
    <property type="chains" value="A/B=1-909"/>
</dbReference>
<dbReference type="PDB" id="8PWL">
    <property type="method" value="EM"/>
    <property type="resolution" value="4.73 A"/>
    <property type="chains" value="A/B=1-909"/>
</dbReference>
<dbReference type="PDB" id="8Q0N">
    <property type="method" value="EM"/>
    <property type="resolution" value="4.20 A"/>
    <property type="chains" value="B=22-909"/>
</dbReference>
<dbReference type="PDBsum" id="8H8X"/>
<dbReference type="PDBsum" id="8HAE"/>
<dbReference type="PDBsum" id="8PWL"/>
<dbReference type="PDBsum" id="8Q0N"/>
<dbReference type="EMDB" id="EMD-17994"/>
<dbReference type="EMDB" id="EMD-18056"/>
<dbReference type="EMDB" id="EMD-34551"/>
<dbReference type="EMDB" id="EMD-34586"/>
<dbReference type="SASBDB" id="Q8IYU2"/>
<dbReference type="SMR" id="Q8IYU2"/>
<dbReference type="BioGRID" id="121590">
    <property type="interactions" value="65"/>
</dbReference>
<dbReference type="FunCoup" id="Q8IYU2">
    <property type="interactions" value="4101"/>
</dbReference>
<dbReference type="IntAct" id="Q8IYU2">
    <property type="interactions" value="15"/>
</dbReference>
<dbReference type="MINT" id="Q8IYU2"/>
<dbReference type="STRING" id="9606.ENSP00000262903"/>
<dbReference type="iPTMnet" id="Q8IYU2"/>
<dbReference type="PhosphoSitePlus" id="Q8IYU2"/>
<dbReference type="BioMuta" id="HACE1"/>
<dbReference type="DMDM" id="134034136"/>
<dbReference type="jPOST" id="Q8IYU2"/>
<dbReference type="MassIVE" id="Q8IYU2"/>
<dbReference type="PaxDb" id="9606-ENSP00000262903"/>
<dbReference type="PeptideAtlas" id="Q8IYU2"/>
<dbReference type="ProteomicsDB" id="71238">
    <molecule id="Q8IYU2-1"/>
</dbReference>
<dbReference type="ProteomicsDB" id="71239">
    <molecule id="Q8IYU2-2"/>
</dbReference>
<dbReference type="ProteomicsDB" id="71240">
    <molecule id="Q8IYU2-3"/>
</dbReference>
<dbReference type="ProteomicsDB" id="71241">
    <molecule id="Q8IYU2-4"/>
</dbReference>
<dbReference type="Pumba" id="Q8IYU2"/>
<dbReference type="ABCD" id="Q8IYU2">
    <property type="antibodies" value="1 sequenced antibody"/>
</dbReference>
<dbReference type="Antibodypedia" id="32098">
    <property type="antibodies" value="242 antibodies from 28 providers"/>
</dbReference>
<dbReference type="DNASU" id="57531"/>
<dbReference type="Ensembl" id="ENST00000262903.9">
    <molecule id="Q8IYU2-1"/>
    <property type="protein sequence ID" value="ENSP00000262903.4"/>
    <property type="gene ID" value="ENSG00000085382.12"/>
</dbReference>
<dbReference type="Ensembl" id="ENST00000369125.6">
    <molecule id="Q8IYU2-4"/>
    <property type="protein sequence ID" value="ENSP00000358121.2"/>
    <property type="gene ID" value="ENSG00000085382.12"/>
</dbReference>
<dbReference type="GeneID" id="57531"/>
<dbReference type="KEGG" id="hsa:57531"/>
<dbReference type="MANE-Select" id="ENST00000262903.9">
    <property type="protein sequence ID" value="ENSP00000262903.4"/>
    <property type="RefSeq nucleotide sequence ID" value="NM_020771.4"/>
    <property type="RefSeq protein sequence ID" value="NP_065822.2"/>
</dbReference>
<dbReference type="UCSC" id="uc003pqu.1">
    <molecule id="Q8IYU2-1"/>
    <property type="organism name" value="human"/>
</dbReference>
<dbReference type="AGR" id="HGNC:21033"/>
<dbReference type="CTD" id="57531"/>
<dbReference type="DisGeNET" id="57531"/>
<dbReference type="GeneCards" id="HACE1"/>
<dbReference type="HGNC" id="HGNC:21033">
    <property type="gene designation" value="HACE1"/>
</dbReference>
<dbReference type="HPA" id="ENSG00000085382">
    <property type="expression patterns" value="Tissue enhanced (placenta)"/>
</dbReference>
<dbReference type="MalaCards" id="HACE1"/>
<dbReference type="MIM" id="610876">
    <property type="type" value="gene"/>
</dbReference>
<dbReference type="MIM" id="616756">
    <property type="type" value="phenotype"/>
</dbReference>
<dbReference type="neXtProt" id="NX_Q8IYU2"/>
<dbReference type="OpenTargets" id="ENSG00000085382"/>
<dbReference type="Orphanet" id="635">
    <property type="disease" value="Neuroblastoma"/>
</dbReference>
<dbReference type="Orphanet" id="464282">
    <property type="disease" value="Spastic paraplegia-severe developmental delay-epilepsy syndrome"/>
</dbReference>
<dbReference type="PharmGKB" id="PA134983914"/>
<dbReference type="VEuPathDB" id="HostDB:ENSG00000085382"/>
<dbReference type="eggNOG" id="KOG0939">
    <property type="taxonomic scope" value="Eukaryota"/>
</dbReference>
<dbReference type="eggNOG" id="KOG4177">
    <property type="taxonomic scope" value="Eukaryota"/>
</dbReference>
<dbReference type="GeneTree" id="ENSGT00940000155839"/>
<dbReference type="HOGENOM" id="CLU_015878_0_0_1"/>
<dbReference type="InParanoid" id="Q8IYU2"/>
<dbReference type="OrthoDB" id="8068875at2759"/>
<dbReference type="PAN-GO" id="Q8IYU2">
    <property type="GO annotations" value="8 GO annotations based on evolutionary models"/>
</dbReference>
<dbReference type="PhylomeDB" id="Q8IYU2"/>
<dbReference type="TreeFam" id="TF323417"/>
<dbReference type="PathwayCommons" id="Q8IYU2"/>
<dbReference type="Reactome" id="R-HSA-983168">
    <property type="pathway name" value="Antigen processing: Ubiquitination &amp; Proteasome degradation"/>
</dbReference>
<dbReference type="SignaLink" id="Q8IYU2"/>
<dbReference type="SIGNOR" id="Q8IYU2"/>
<dbReference type="UniPathway" id="UPA00143"/>
<dbReference type="BioGRID-ORCS" id="57531">
    <property type="hits" value="20 hits in 1198 CRISPR screens"/>
</dbReference>
<dbReference type="ChiTaRS" id="HACE1">
    <property type="organism name" value="human"/>
</dbReference>
<dbReference type="GenomeRNAi" id="57531"/>
<dbReference type="Pharos" id="Q8IYU2">
    <property type="development level" value="Tbio"/>
</dbReference>
<dbReference type="PRO" id="PR:Q8IYU2"/>
<dbReference type="Proteomes" id="UP000005640">
    <property type="component" value="Chromosome 6"/>
</dbReference>
<dbReference type="RNAct" id="Q8IYU2">
    <property type="molecule type" value="protein"/>
</dbReference>
<dbReference type="Bgee" id="ENSG00000085382">
    <property type="expression patterns" value="Expressed in secondary oocyte and 171 other cell types or tissues"/>
</dbReference>
<dbReference type="ExpressionAtlas" id="Q8IYU2">
    <property type="expression patterns" value="baseline and differential"/>
</dbReference>
<dbReference type="GO" id="GO:0005737">
    <property type="term" value="C:cytoplasm"/>
    <property type="evidence" value="ECO:0000318"/>
    <property type="project" value="GO_Central"/>
</dbReference>
<dbReference type="GO" id="GO:0005783">
    <property type="term" value="C:endoplasmic reticulum"/>
    <property type="evidence" value="ECO:0000314"/>
    <property type="project" value="HPA"/>
</dbReference>
<dbReference type="GO" id="GO:0032580">
    <property type="term" value="C:Golgi cisterna membrane"/>
    <property type="evidence" value="ECO:0007669"/>
    <property type="project" value="UniProtKB-SubCell"/>
</dbReference>
<dbReference type="GO" id="GO:0000139">
    <property type="term" value="C:Golgi membrane"/>
    <property type="evidence" value="ECO:0000314"/>
    <property type="project" value="UniProtKB"/>
</dbReference>
<dbReference type="GO" id="GO:0016604">
    <property type="term" value="C:nuclear body"/>
    <property type="evidence" value="ECO:0000314"/>
    <property type="project" value="HPA"/>
</dbReference>
<dbReference type="GO" id="GO:0005634">
    <property type="term" value="C:nucleus"/>
    <property type="evidence" value="ECO:0000318"/>
    <property type="project" value="GO_Central"/>
</dbReference>
<dbReference type="GO" id="GO:0031267">
    <property type="term" value="F:small GTPase binding"/>
    <property type="evidence" value="ECO:0000314"/>
    <property type="project" value="UniProtKB"/>
</dbReference>
<dbReference type="GO" id="GO:0061630">
    <property type="term" value="F:ubiquitin protein ligase activity"/>
    <property type="evidence" value="ECO:0000318"/>
    <property type="project" value="GO_Central"/>
</dbReference>
<dbReference type="GO" id="GO:0004842">
    <property type="term" value="F:ubiquitin-protein transferase activity"/>
    <property type="evidence" value="ECO:0000314"/>
    <property type="project" value="UniProtKB"/>
</dbReference>
<dbReference type="GO" id="GO:0007030">
    <property type="term" value="P:Golgi organization"/>
    <property type="evidence" value="ECO:0000314"/>
    <property type="project" value="UniProtKB"/>
</dbReference>
<dbReference type="GO" id="GO:0061025">
    <property type="term" value="P:membrane fusion"/>
    <property type="evidence" value="ECO:0000315"/>
    <property type="project" value="UniProtKB"/>
</dbReference>
<dbReference type="GO" id="GO:0070936">
    <property type="term" value="P:protein K48-linked ubiquitination"/>
    <property type="evidence" value="ECO:0000314"/>
    <property type="project" value="UniProtKB"/>
</dbReference>
<dbReference type="GO" id="GO:0016567">
    <property type="term" value="P:protein ubiquitination"/>
    <property type="evidence" value="ECO:0000314"/>
    <property type="project" value="UniProtKB"/>
</dbReference>
<dbReference type="GO" id="GO:0016601">
    <property type="term" value="P:Rac protein signal transduction"/>
    <property type="evidence" value="ECO:0000304"/>
    <property type="project" value="UniProtKB"/>
</dbReference>
<dbReference type="GO" id="GO:0030334">
    <property type="term" value="P:regulation of cell migration"/>
    <property type="evidence" value="ECO:0000315"/>
    <property type="project" value="UniProtKB"/>
</dbReference>
<dbReference type="GO" id="GO:0006511">
    <property type="term" value="P:ubiquitin-dependent protein catabolic process"/>
    <property type="evidence" value="ECO:0000314"/>
    <property type="project" value="UniProtKB"/>
</dbReference>
<dbReference type="CDD" id="cd00078">
    <property type="entry name" value="HECTc"/>
    <property type="match status" value="1"/>
</dbReference>
<dbReference type="FunFam" id="3.90.1750.10:FF:000026">
    <property type="entry name" value="E3 ubiquitin-protein ligase HACE1"/>
    <property type="match status" value="1"/>
</dbReference>
<dbReference type="FunFam" id="1.25.40.20:FF:000051">
    <property type="entry name" value="E3 ubiquitin-protein ligase HACE1 isoform X1"/>
    <property type="match status" value="1"/>
</dbReference>
<dbReference type="FunFam" id="3.30.2410.10:FF:000016">
    <property type="entry name" value="E3 ubiquitin-protein ligase HACE1 isoform X1"/>
    <property type="match status" value="1"/>
</dbReference>
<dbReference type="FunFam" id="3.90.1750.10:FF:000019">
    <property type="entry name" value="E3 ubiquitin-protein ligase HACE1 isoform X1"/>
    <property type="match status" value="1"/>
</dbReference>
<dbReference type="FunFam" id="3.30.2160.10:FF:000001">
    <property type="entry name" value="E3 ubiquitin-protein ligase NEDD4-like"/>
    <property type="match status" value="1"/>
</dbReference>
<dbReference type="FunFam" id="1.25.40.20:FF:000256">
    <property type="entry name" value="HECT domain and ankyrin repeat containing E3 ubiquitin protein ligase 1"/>
    <property type="match status" value="1"/>
</dbReference>
<dbReference type="Gene3D" id="1.25.40.20">
    <property type="entry name" value="Ankyrin repeat-containing domain"/>
    <property type="match status" value="2"/>
</dbReference>
<dbReference type="Gene3D" id="3.30.2160.10">
    <property type="entry name" value="Hect, E3 ligase catalytic domain"/>
    <property type="match status" value="1"/>
</dbReference>
<dbReference type="Gene3D" id="3.30.2410.10">
    <property type="entry name" value="Hect, E3 ligase catalytic domain"/>
    <property type="match status" value="1"/>
</dbReference>
<dbReference type="Gene3D" id="3.90.1750.10">
    <property type="entry name" value="Hect, E3 ligase catalytic domains"/>
    <property type="match status" value="1"/>
</dbReference>
<dbReference type="InterPro" id="IPR002110">
    <property type="entry name" value="Ankyrin_rpt"/>
</dbReference>
<dbReference type="InterPro" id="IPR036770">
    <property type="entry name" value="Ankyrin_rpt-contain_sf"/>
</dbReference>
<dbReference type="InterPro" id="IPR050409">
    <property type="entry name" value="E3_ubiq-protein_ligase"/>
</dbReference>
<dbReference type="InterPro" id="IPR000569">
    <property type="entry name" value="HECT_dom"/>
</dbReference>
<dbReference type="InterPro" id="IPR035983">
    <property type="entry name" value="Hect_E3_ubiquitin_ligase"/>
</dbReference>
<dbReference type="PANTHER" id="PTHR11254:SF363">
    <property type="entry name" value="E3 UBIQUITIN-PROTEIN LIGASE HACE1"/>
    <property type="match status" value="1"/>
</dbReference>
<dbReference type="PANTHER" id="PTHR11254">
    <property type="entry name" value="HECT DOMAIN UBIQUITIN-PROTEIN LIGASE"/>
    <property type="match status" value="1"/>
</dbReference>
<dbReference type="Pfam" id="PF12796">
    <property type="entry name" value="Ank_2"/>
    <property type="match status" value="1"/>
</dbReference>
<dbReference type="Pfam" id="PF13637">
    <property type="entry name" value="Ank_4"/>
    <property type="match status" value="1"/>
</dbReference>
<dbReference type="Pfam" id="PF00632">
    <property type="entry name" value="HECT"/>
    <property type="match status" value="1"/>
</dbReference>
<dbReference type="PRINTS" id="PR01415">
    <property type="entry name" value="ANKYRIN"/>
</dbReference>
<dbReference type="SMART" id="SM00248">
    <property type="entry name" value="ANK"/>
    <property type="match status" value="6"/>
</dbReference>
<dbReference type="SMART" id="SM00119">
    <property type="entry name" value="HECTc"/>
    <property type="match status" value="1"/>
</dbReference>
<dbReference type="SUPFAM" id="SSF48403">
    <property type="entry name" value="Ankyrin repeat"/>
    <property type="match status" value="1"/>
</dbReference>
<dbReference type="SUPFAM" id="SSF56204">
    <property type="entry name" value="Hect, E3 ligase catalytic domain"/>
    <property type="match status" value="1"/>
</dbReference>
<dbReference type="PROSITE" id="PS50297">
    <property type="entry name" value="ANK_REP_REGION"/>
    <property type="match status" value="1"/>
</dbReference>
<dbReference type="PROSITE" id="PS50088">
    <property type="entry name" value="ANK_REPEAT"/>
    <property type="match status" value="5"/>
</dbReference>
<dbReference type="PROSITE" id="PS50237">
    <property type="entry name" value="HECT"/>
    <property type="match status" value="1"/>
</dbReference>
<reference key="1">
    <citation type="journal article" date="2000" name="DNA Res.">
        <title>Prediction of the coding sequences of unidentified human genes. XVI. The complete sequences of 150 new cDNA clones from brain which code for large proteins in vitro.</title>
        <authorList>
            <person name="Nagase T."/>
            <person name="Kikuno R."/>
            <person name="Ishikawa K."/>
            <person name="Hirosawa M."/>
            <person name="Ohara O."/>
        </authorList>
    </citation>
    <scope>NUCLEOTIDE SEQUENCE [LARGE SCALE MRNA] (ISOFORM 3)</scope>
    <source>
        <tissue>Brain</tissue>
    </source>
</reference>
<reference key="2">
    <citation type="journal article" date="2007" name="BMC Genomics">
        <title>The full-ORF clone resource of the German cDNA consortium.</title>
        <authorList>
            <person name="Bechtel S."/>
            <person name="Rosenfelder H."/>
            <person name="Duda A."/>
            <person name="Schmidt C.P."/>
            <person name="Ernst U."/>
            <person name="Wellenreuther R."/>
            <person name="Mehrle A."/>
            <person name="Schuster C."/>
            <person name="Bahr A."/>
            <person name="Bloecker H."/>
            <person name="Heubner D."/>
            <person name="Hoerlein A."/>
            <person name="Michel G."/>
            <person name="Wedler H."/>
            <person name="Koehrer K."/>
            <person name="Ottenwaelder B."/>
            <person name="Poustka A."/>
            <person name="Wiemann S."/>
            <person name="Schupp I."/>
        </authorList>
    </citation>
    <scope>NUCLEOTIDE SEQUENCE [LARGE SCALE MRNA] (ISOFORM 2)</scope>
    <source>
        <tissue>Testis</tissue>
    </source>
</reference>
<reference key="3">
    <citation type="journal article" date="2004" name="Nat. Genet.">
        <title>Complete sequencing and characterization of 21,243 full-length human cDNAs.</title>
        <authorList>
            <person name="Ota T."/>
            <person name="Suzuki Y."/>
            <person name="Nishikawa T."/>
            <person name="Otsuki T."/>
            <person name="Sugiyama T."/>
            <person name="Irie R."/>
            <person name="Wakamatsu A."/>
            <person name="Hayashi K."/>
            <person name="Sato H."/>
            <person name="Nagai K."/>
            <person name="Kimura K."/>
            <person name="Makita H."/>
            <person name="Sekine M."/>
            <person name="Obayashi M."/>
            <person name="Nishi T."/>
            <person name="Shibahara T."/>
            <person name="Tanaka T."/>
            <person name="Ishii S."/>
            <person name="Yamamoto J."/>
            <person name="Saito K."/>
            <person name="Kawai Y."/>
            <person name="Isono Y."/>
            <person name="Nakamura Y."/>
            <person name="Nagahari K."/>
            <person name="Murakami K."/>
            <person name="Yasuda T."/>
            <person name="Iwayanagi T."/>
            <person name="Wagatsuma M."/>
            <person name="Shiratori A."/>
            <person name="Sudo H."/>
            <person name="Hosoiri T."/>
            <person name="Kaku Y."/>
            <person name="Kodaira H."/>
            <person name="Kondo H."/>
            <person name="Sugawara M."/>
            <person name="Takahashi M."/>
            <person name="Kanda K."/>
            <person name="Yokoi T."/>
            <person name="Furuya T."/>
            <person name="Kikkawa E."/>
            <person name="Omura Y."/>
            <person name="Abe K."/>
            <person name="Kamihara K."/>
            <person name="Katsuta N."/>
            <person name="Sato K."/>
            <person name="Tanikawa M."/>
            <person name="Yamazaki M."/>
            <person name="Ninomiya K."/>
            <person name="Ishibashi T."/>
            <person name="Yamashita H."/>
            <person name="Murakawa K."/>
            <person name="Fujimori K."/>
            <person name="Tanai H."/>
            <person name="Kimata M."/>
            <person name="Watanabe M."/>
            <person name="Hiraoka S."/>
            <person name="Chiba Y."/>
            <person name="Ishida S."/>
            <person name="Ono Y."/>
            <person name="Takiguchi S."/>
            <person name="Watanabe S."/>
            <person name="Yosida M."/>
            <person name="Hotuta T."/>
            <person name="Kusano J."/>
            <person name="Kanehori K."/>
            <person name="Takahashi-Fujii A."/>
            <person name="Hara H."/>
            <person name="Tanase T.-O."/>
            <person name="Nomura Y."/>
            <person name="Togiya S."/>
            <person name="Komai F."/>
            <person name="Hara R."/>
            <person name="Takeuchi K."/>
            <person name="Arita M."/>
            <person name="Imose N."/>
            <person name="Musashino K."/>
            <person name="Yuuki H."/>
            <person name="Oshima A."/>
            <person name="Sasaki N."/>
            <person name="Aotsuka S."/>
            <person name="Yoshikawa Y."/>
            <person name="Matsunawa H."/>
            <person name="Ichihara T."/>
            <person name="Shiohata N."/>
            <person name="Sano S."/>
            <person name="Moriya S."/>
            <person name="Momiyama H."/>
            <person name="Satoh N."/>
            <person name="Takami S."/>
            <person name="Terashima Y."/>
            <person name="Suzuki O."/>
            <person name="Nakagawa S."/>
            <person name="Senoh A."/>
            <person name="Mizoguchi H."/>
            <person name="Goto Y."/>
            <person name="Shimizu F."/>
            <person name="Wakebe H."/>
            <person name="Hishigaki H."/>
            <person name="Watanabe T."/>
            <person name="Sugiyama A."/>
            <person name="Takemoto M."/>
            <person name="Kawakami B."/>
            <person name="Yamazaki M."/>
            <person name="Watanabe K."/>
            <person name="Kumagai A."/>
            <person name="Itakura S."/>
            <person name="Fukuzumi Y."/>
            <person name="Fujimori Y."/>
            <person name="Komiyama M."/>
            <person name="Tashiro H."/>
            <person name="Tanigami A."/>
            <person name="Fujiwara T."/>
            <person name="Ono T."/>
            <person name="Yamada K."/>
            <person name="Fujii Y."/>
            <person name="Ozaki K."/>
            <person name="Hirao M."/>
            <person name="Ohmori Y."/>
            <person name="Kawabata A."/>
            <person name="Hikiji T."/>
            <person name="Kobatake N."/>
            <person name="Inagaki H."/>
            <person name="Ikema Y."/>
            <person name="Okamoto S."/>
            <person name="Okitani R."/>
            <person name="Kawakami T."/>
            <person name="Noguchi S."/>
            <person name="Itoh T."/>
            <person name="Shigeta K."/>
            <person name="Senba T."/>
            <person name="Matsumura K."/>
            <person name="Nakajima Y."/>
            <person name="Mizuno T."/>
            <person name="Morinaga M."/>
            <person name="Sasaki M."/>
            <person name="Togashi T."/>
            <person name="Oyama M."/>
            <person name="Hata H."/>
            <person name="Watanabe M."/>
            <person name="Komatsu T."/>
            <person name="Mizushima-Sugano J."/>
            <person name="Satoh T."/>
            <person name="Shirai Y."/>
            <person name="Takahashi Y."/>
            <person name="Nakagawa K."/>
            <person name="Okumura K."/>
            <person name="Nagase T."/>
            <person name="Nomura N."/>
            <person name="Kikuchi H."/>
            <person name="Masuho Y."/>
            <person name="Yamashita R."/>
            <person name="Nakai K."/>
            <person name="Yada T."/>
            <person name="Nakamura Y."/>
            <person name="Ohara O."/>
            <person name="Isogai T."/>
            <person name="Sugano S."/>
        </authorList>
    </citation>
    <scope>NUCLEOTIDE SEQUENCE [LARGE SCALE MRNA] (ISOFORMS 1 AND 4)</scope>
    <source>
        <tissue>Amygdala</tissue>
        <tissue>Placenta</tissue>
        <tissue>Thalamus</tissue>
    </source>
</reference>
<reference key="4">
    <citation type="journal article" date="2003" name="Nature">
        <title>The DNA sequence and analysis of human chromosome 6.</title>
        <authorList>
            <person name="Mungall A.J."/>
            <person name="Palmer S.A."/>
            <person name="Sims S.K."/>
            <person name="Edwards C.A."/>
            <person name="Ashurst J.L."/>
            <person name="Wilming L."/>
            <person name="Jones M.C."/>
            <person name="Horton R."/>
            <person name="Hunt S.E."/>
            <person name="Scott C.E."/>
            <person name="Gilbert J.G.R."/>
            <person name="Clamp M.E."/>
            <person name="Bethel G."/>
            <person name="Milne S."/>
            <person name="Ainscough R."/>
            <person name="Almeida J.P."/>
            <person name="Ambrose K.D."/>
            <person name="Andrews T.D."/>
            <person name="Ashwell R.I.S."/>
            <person name="Babbage A.K."/>
            <person name="Bagguley C.L."/>
            <person name="Bailey J."/>
            <person name="Banerjee R."/>
            <person name="Barker D.J."/>
            <person name="Barlow K.F."/>
            <person name="Bates K."/>
            <person name="Beare D.M."/>
            <person name="Beasley H."/>
            <person name="Beasley O."/>
            <person name="Bird C.P."/>
            <person name="Blakey S.E."/>
            <person name="Bray-Allen S."/>
            <person name="Brook J."/>
            <person name="Brown A.J."/>
            <person name="Brown J.Y."/>
            <person name="Burford D.C."/>
            <person name="Burrill W."/>
            <person name="Burton J."/>
            <person name="Carder C."/>
            <person name="Carter N.P."/>
            <person name="Chapman J.C."/>
            <person name="Clark S.Y."/>
            <person name="Clark G."/>
            <person name="Clee C.M."/>
            <person name="Clegg S."/>
            <person name="Cobley V."/>
            <person name="Collier R.E."/>
            <person name="Collins J.E."/>
            <person name="Colman L.K."/>
            <person name="Corby N.R."/>
            <person name="Coville G.J."/>
            <person name="Culley K.M."/>
            <person name="Dhami P."/>
            <person name="Davies J."/>
            <person name="Dunn M."/>
            <person name="Earthrowl M.E."/>
            <person name="Ellington A.E."/>
            <person name="Evans K.A."/>
            <person name="Faulkner L."/>
            <person name="Francis M.D."/>
            <person name="Frankish A."/>
            <person name="Frankland J."/>
            <person name="French L."/>
            <person name="Garner P."/>
            <person name="Garnett J."/>
            <person name="Ghori M.J."/>
            <person name="Gilby L.M."/>
            <person name="Gillson C.J."/>
            <person name="Glithero R.J."/>
            <person name="Grafham D.V."/>
            <person name="Grant M."/>
            <person name="Gribble S."/>
            <person name="Griffiths C."/>
            <person name="Griffiths M.N.D."/>
            <person name="Hall R."/>
            <person name="Halls K.S."/>
            <person name="Hammond S."/>
            <person name="Harley J.L."/>
            <person name="Hart E.A."/>
            <person name="Heath P.D."/>
            <person name="Heathcott R."/>
            <person name="Holmes S.J."/>
            <person name="Howden P.J."/>
            <person name="Howe K.L."/>
            <person name="Howell G.R."/>
            <person name="Huckle E."/>
            <person name="Humphray S.J."/>
            <person name="Humphries M.D."/>
            <person name="Hunt A.R."/>
            <person name="Johnson C.M."/>
            <person name="Joy A.A."/>
            <person name="Kay M."/>
            <person name="Keenan S.J."/>
            <person name="Kimberley A.M."/>
            <person name="King A."/>
            <person name="Laird G.K."/>
            <person name="Langford C."/>
            <person name="Lawlor S."/>
            <person name="Leongamornlert D.A."/>
            <person name="Leversha M."/>
            <person name="Lloyd C.R."/>
            <person name="Lloyd D.M."/>
            <person name="Loveland J.E."/>
            <person name="Lovell J."/>
            <person name="Martin S."/>
            <person name="Mashreghi-Mohammadi M."/>
            <person name="Maslen G.L."/>
            <person name="Matthews L."/>
            <person name="McCann O.T."/>
            <person name="McLaren S.J."/>
            <person name="McLay K."/>
            <person name="McMurray A."/>
            <person name="Moore M.J.F."/>
            <person name="Mullikin J.C."/>
            <person name="Niblett D."/>
            <person name="Nickerson T."/>
            <person name="Novik K.L."/>
            <person name="Oliver K."/>
            <person name="Overton-Larty E.K."/>
            <person name="Parker A."/>
            <person name="Patel R."/>
            <person name="Pearce A.V."/>
            <person name="Peck A.I."/>
            <person name="Phillimore B.J.C.T."/>
            <person name="Phillips S."/>
            <person name="Plumb R.W."/>
            <person name="Porter K.M."/>
            <person name="Ramsey Y."/>
            <person name="Ranby S.A."/>
            <person name="Rice C.M."/>
            <person name="Ross M.T."/>
            <person name="Searle S.M."/>
            <person name="Sehra H.K."/>
            <person name="Sheridan E."/>
            <person name="Skuce C.D."/>
            <person name="Smith S."/>
            <person name="Smith M."/>
            <person name="Spraggon L."/>
            <person name="Squares S.L."/>
            <person name="Steward C.A."/>
            <person name="Sycamore N."/>
            <person name="Tamlyn-Hall G."/>
            <person name="Tester J."/>
            <person name="Theaker A.J."/>
            <person name="Thomas D.W."/>
            <person name="Thorpe A."/>
            <person name="Tracey A."/>
            <person name="Tromans A."/>
            <person name="Tubby B."/>
            <person name="Wall M."/>
            <person name="Wallis J.M."/>
            <person name="West A.P."/>
            <person name="White S.S."/>
            <person name="Whitehead S.L."/>
            <person name="Whittaker H."/>
            <person name="Wild A."/>
            <person name="Willey D.J."/>
            <person name="Wilmer T.E."/>
            <person name="Wood J.M."/>
            <person name="Wray P.W."/>
            <person name="Wyatt J.C."/>
            <person name="Young L."/>
            <person name="Younger R.M."/>
            <person name="Bentley D.R."/>
            <person name="Coulson A."/>
            <person name="Durbin R.M."/>
            <person name="Hubbard T."/>
            <person name="Sulston J.E."/>
            <person name="Dunham I."/>
            <person name="Rogers J."/>
            <person name="Beck S."/>
        </authorList>
    </citation>
    <scope>NUCLEOTIDE SEQUENCE [LARGE SCALE GENOMIC DNA]</scope>
</reference>
<reference key="5">
    <citation type="journal article" date="2004" name="Genome Res.">
        <title>The status, quality, and expansion of the NIH full-length cDNA project: the Mammalian Gene Collection (MGC).</title>
        <authorList>
            <consortium name="The MGC Project Team"/>
        </authorList>
    </citation>
    <scope>NUCLEOTIDE SEQUENCE [LARGE SCALE MRNA] (ISOFORM 1)</scope>
    <scope>VARIANTS HIS-17 AND THR-374</scope>
    <source>
        <tissue>Testis</tissue>
    </source>
</reference>
<reference key="6">
    <citation type="journal article" date="2004" name="Hum. Mol. Genet.">
        <title>Differential expression of a novel ankyrin containing E3 ubiquitin-protein ligase, Hace1, in sporadic Wilms' tumor versus normal kidney.</title>
        <authorList>
            <person name="Anglesio M.S."/>
            <person name="Evdokimova V."/>
            <person name="Melnyk N."/>
            <person name="Zhang L."/>
            <person name="Fernandez C.V."/>
            <person name="Grundy P.E."/>
            <person name="Leach S."/>
            <person name="Marra M.A."/>
            <person name="Brooks-Wilson A.R."/>
            <person name="Penninger J."/>
            <person name="Sorensen P.H.B."/>
        </authorList>
    </citation>
    <scope>FUNCTION</scope>
    <scope>TISSUE SPECIFICITY</scope>
    <scope>DEVELOPMENTAL STAGE</scope>
    <scope>MUTAGENESIS OF CYS-876</scope>
    <scope>INTERACTION WITH THE 20S CORE PROTEASOMAL SUBUNIT</scope>
    <scope>SUBCELLULAR LOCATION</scope>
    <scope>INDUCTION</scope>
</reference>
<reference key="7">
    <citation type="journal article" date="2007" name="Nat. Med.">
        <title>The E3 ligase HACE1 is a critical chromosome 6q21 tumor suppressor involved in multiple cancers.</title>
        <authorList>
            <person name="Zhang L."/>
            <person name="Anglesio M.S."/>
            <person name="O'Sullivan M."/>
            <person name="Zhang F."/>
            <person name="Yang G."/>
            <person name="Sarao R."/>
            <person name="Mai P.N."/>
            <person name="Cronin S."/>
            <person name="Hara H."/>
            <person name="Melnyk N."/>
            <person name="Li L."/>
            <person name="Wada T."/>
            <person name="Liu P.P."/>
            <person name="Farrar J."/>
            <person name="Arceci R.J."/>
            <person name="Sorensen P.H."/>
            <person name="Penninger J.M."/>
        </authorList>
    </citation>
    <scope>INVOLVEMENT IN WILMS TUMOR</scope>
    <scope>INDUCTION</scope>
</reference>
<reference key="8">
    <citation type="journal article" date="2010" name="J. Med. Genet.">
        <title>Constitutional translocation breakpoint mapping by genome-wide paired-end sequencing identifies HACE1 as a putative Wilms tumour susceptibility gene.</title>
        <authorList>
            <person name="Slade I."/>
            <person name="Stephens P."/>
            <person name="Douglas J."/>
            <person name="Barker K."/>
            <person name="Stebbings L."/>
            <person name="Abbaszadeh F."/>
            <person name="Pritchard-Jones K."/>
            <person name="Cole R."/>
            <person name="Pizer B."/>
            <person name="Stiller C."/>
            <person name="Vujanic G."/>
            <person name="Scott R.H."/>
            <person name="Stratton M.R."/>
            <person name="Rahman N."/>
        </authorList>
    </citation>
    <scope>INVOLVEMENT IN WILMS TUMOR</scope>
    <scope>CHROMOSOMAL TRANSLOCATION</scope>
</reference>
<reference key="9">
    <citation type="journal article" date="2011" name="Dev. Cell">
        <title>The E3 ubiquitin-ligase HACE1 catalyzes the ubiquitylation of active Rac1.</title>
        <authorList>
            <person name="Torrino S."/>
            <person name="Visvikis O."/>
            <person name="Doye A."/>
            <person name="Boyer L."/>
            <person name="Stefani C."/>
            <person name="Munro P."/>
            <person name="Bertoglio J."/>
            <person name="Gacon G."/>
            <person name="Mettouchi A."/>
            <person name="Lemichez E."/>
        </authorList>
    </citation>
    <scope>FUNCTION</scope>
    <scope>MUTAGENESIS OF CYS-876</scope>
</reference>
<reference key="10">
    <citation type="journal article" date="2011" name="Nat. Commun.">
        <title>The ubiquitin ligase HACE1 regulates Golgi membrane dynamics during the cell cycle.</title>
        <authorList>
            <person name="Tang D."/>
            <person name="Xiang Y."/>
            <person name="De Renzis S."/>
            <person name="Rink J."/>
            <person name="Zheng G."/>
            <person name="Zerial M."/>
            <person name="Wang Y."/>
        </authorList>
    </citation>
    <scope>FUNCTION</scope>
    <scope>SUBCELLULAR LOCATION</scope>
    <scope>MUTAGENESIS OF CYS-876</scope>
    <scope>INTERACTION WITH RAB1; RAB4 AND RAB11</scope>
</reference>
<reference key="11">
    <citation type="journal article" date="2011" name="Sci. Signal.">
        <title>System-wide temporal characterization of the proteome and phosphoproteome of human embryonic stem cell differentiation.</title>
        <authorList>
            <person name="Rigbolt K.T."/>
            <person name="Prokhorova T.A."/>
            <person name="Akimov V."/>
            <person name="Henningsen J."/>
            <person name="Johansen P.T."/>
            <person name="Kratchmarova I."/>
            <person name="Kassem M."/>
            <person name="Mann M."/>
            <person name="Olsen J.V."/>
            <person name="Blagoev B."/>
        </authorList>
    </citation>
    <scope>IDENTIFICATION BY MASS SPECTROMETRY [LARGE SCALE ANALYSIS]</scope>
</reference>
<reference key="12">
    <citation type="journal article" date="2015" name="J. Med. Genet.">
        <title>HACE1 deficiency causes an autosomal recessive neurodevelopmental syndrome.</title>
        <authorList>
            <person name="Hollstein R."/>
            <person name="Parry D.A."/>
            <person name="Nalbach L."/>
            <person name="Logan C.V."/>
            <person name="Strom T.M."/>
            <person name="Hartill V.L."/>
            <person name="Carr I.M."/>
            <person name="Korenke G.C."/>
            <person name="Uppal S."/>
            <person name="Ahmed M."/>
            <person name="Wieland T."/>
            <person name="Markham A.F."/>
            <person name="Bennett C.P."/>
            <person name="Gillessen-Kaesbach G."/>
            <person name="Sheridan E.G."/>
            <person name="Kaiser F.J."/>
            <person name="Bonthron D.T."/>
        </authorList>
    </citation>
    <scope>INVOLVEMENT IN SPPRS</scope>
</reference>
<reference key="13">
    <citation type="journal article" date="2015" name="Nat. Genet.">
        <title>Discovery of four recessive developmental disorders using probabilistic genotype and phenotype matching among 4,125 families.</title>
        <authorList>
            <consortium name="DDD study"/>
            <person name="Akawi N."/>
            <person name="McRae J."/>
            <person name="Ansari M."/>
            <person name="Balasubramanian M."/>
            <person name="Blyth M."/>
            <person name="Brady A.F."/>
            <person name="Clayton S."/>
            <person name="Cole T."/>
            <person name="Deshpande C."/>
            <person name="Fitzgerald T.W."/>
            <person name="Foulds N."/>
            <person name="Francis R."/>
            <person name="Gabriel G."/>
            <person name="Gerety S.S."/>
            <person name="Goodship J."/>
            <person name="Hobson E."/>
            <person name="Jones W.D."/>
            <person name="Joss S."/>
            <person name="King D."/>
            <person name="Klena N."/>
            <person name="Kumar A."/>
            <person name="Lees M."/>
            <person name="Lelliott C."/>
            <person name="Lord J."/>
            <person name="McMullan D."/>
            <person name="O'Regan M."/>
            <person name="Osio D."/>
            <person name="Piombo V."/>
            <person name="Prigmore E."/>
            <person name="Rajan D."/>
            <person name="Rosser E."/>
            <person name="Sifrim A."/>
            <person name="Smith A."/>
            <person name="Swaminathan G.J."/>
            <person name="Turnpenny P."/>
            <person name="Whitworth J."/>
            <person name="Wright C.F."/>
            <person name="Firth H.V."/>
            <person name="Barrett J.C."/>
            <person name="Lo C.W."/>
            <person name="FitzPatrick D.R."/>
            <person name="Hurles M.E."/>
        </authorList>
    </citation>
    <scope>INVOLVEMENT IN SPPRS</scope>
    <scope>VARIANT SPPRS LEU-832 DEL</scope>
</reference>
<reference evidence="20 21" key="14">
    <citation type="journal article" date="2023" name="Adv. Sci.">
        <title>Structural Basis for the Enzymatic Activity of the HACE1 HECT-Type E3 Ligase Through N-Terminal Helix Dimerization.</title>
        <authorList>
            <person name="Singh S."/>
            <person name="Machida S."/>
            <person name="Tulsian N.K."/>
            <person name="Choong Y.K."/>
            <person name="Ng J."/>
            <person name="Shankar S."/>
            <person name="Liu Y."/>
            <person name="Chandiramani K.V."/>
            <person name="Shi J."/>
            <person name="Sivaraman J."/>
        </authorList>
    </citation>
    <scope>STRUCTURE BY ELECTRON MICROSCOPY (3.92 ANGSTROMS)</scope>
    <scope>FUNCTION</scope>
    <scope>CATALYTIC ACTIVITY</scope>
    <scope>ACTIVITY REGULATION</scope>
    <scope>PATHWAY</scope>
    <scope>SUBUNIT</scope>
    <scope>DOMAIN</scope>
    <scope>AUTOUBIQUITINATION</scope>
    <scope>ANK REPEATS</scope>
    <scope>MUTAGENESIS OF VAL-140; GLN-173; ASN-174; GLY-175; ALA-204; ARG-332; ARG-353; TYR-906 AND 907-THR--ALA-909</scope>
</reference>
<reference evidence="22 23" key="15">
    <citation type="journal article" date="2024" name="Nat. Struct. Mol. Biol.">
        <title>Structural mechanisms of autoinhibition and substrate recognition by the ubiquitin ligase HACE1.</title>
        <authorList>
            <person name="During J."/>
            <person name="Wolter M."/>
            <person name="Toplak J.J."/>
            <person name="Torres C."/>
            <person name="Dybkov O."/>
            <person name="Fokkens T.J."/>
            <person name="Bohnsack K.E."/>
            <person name="Urlaub H."/>
            <person name="Steinchen W."/>
            <person name="Dienemann C."/>
            <person name="Lorenz S."/>
        </authorList>
    </citation>
    <scope>STRUCTURE BY ELECTRON MICROSCOPY (4.20 ANGSTROMS) IN COMPLEX WITH RAC1</scope>
    <scope>FUNCTION</scope>
    <scope>CATALYTIC ACTIVITY</scope>
    <scope>ACTIVITY REGULATION</scope>
    <scope>PATHWAY</scope>
    <scope>SUBUNIT</scope>
    <scope>DOMAIN</scope>
    <scope>AUTOUBIQUITINATION</scope>
    <scope>ANK REPEATS</scope>
    <scope>MUTAGENESIS OF LEU-8; LEU-11; SER-14; LEU-15; THR-20; ILE-694; LEU-704 AND LEU-706</scope>
</reference>
<keyword id="KW-0002">3D-structure</keyword>
<keyword id="KW-0025">Alternative splicing</keyword>
<keyword id="KW-0040">ANK repeat</keyword>
<keyword id="KW-0131">Cell cycle</keyword>
<keyword id="KW-0160">Chromosomal rearrangement</keyword>
<keyword id="KW-0963">Cytoplasm</keyword>
<keyword id="KW-0225">Disease variant</keyword>
<keyword id="KW-0256">Endoplasmic reticulum</keyword>
<keyword id="KW-0333">Golgi apparatus</keyword>
<keyword id="KW-0890">Hereditary spastic paraplegia</keyword>
<keyword id="KW-0472">Membrane</keyword>
<keyword id="KW-0523">Neurodegeneration</keyword>
<keyword id="KW-1267">Proteomics identification</keyword>
<keyword id="KW-1185">Reference proteome</keyword>
<keyword id="KW-0677">Repeat</keyword>
<keyword id="KW-0804">Transcription</keyword>
<keyword id="KW-0805">Transcription regulation</keyword>
<keyword id="KW-0808">Transferase</keyword>
<keyword id="KW-0832">Ubl conjugation</keyword>
<keyword id="KW-0833">Ubl conjugation pathway</keyword>
<name>HACE1_HUMAN</name>
<feature type="chain" id="PRO_0000280622" description="E3 ubiquitin-protein ligase HACE1">
    <location>
        <begin position="1"/>
        <end position="909"/>
    </location>
</feature>
<feature type="repeat" description="ANK 1" evidence="12 13 20 21 22">
    <location>
        <begin position="23"/>
        <end position="55"/>
    </location>
</feature>
<feature type="repeat" description="ANK 2" evidence="12 13 20 21 22">
    <location>
        <begin position="64"/>
        <end position="93"/>
    </location>
</feature>
<feature type="repeat" description="ANK 3" evidence="12 13 20 21 22">
    <location>
        <begin position="97"/>
        <end position="126"/>
    </location>
</feature>
<feature type="repeat" description="ANK 4" evidence="12 13 20 21 22">
    <location>
        <begin position="130"/>
        <end position="159"/>
    </location>
</feature>
<feature type="repeat" description="ANK 5" evidence="12 13 20 21 22">
    <location>
        <begin position="163"/>
        <end position="192"/>
    </location>
</feature>
<feature type="repeat" description="ANK 6" evidence="12 13 20 21 22">
    <location>
        <begin position="196"/>
        <end position="226"/>
    </location>
</feature>
<feature type="repeat" description="ANK 7" evidence="12 13 20 21 22">
    <location>
        <begin position="228"/>
        <end position="253"/>
    </location>
</feature>
<feature type="domain" description="HECT" evidence="2">
    <location>
        <begin position="574"/>
        <end position="909"/>
    </location>
</feature>
<feature type="region of interest" description="N-terminal helix important for homodimerization" evidence="12 13">
    <location>
        <begin position="1"/>
        <end position="21"/>
    </location>
</feature>
<feature type="region of interest" description="Disordered" evidence="3">
    <location>
        <begin position="398"/>
        <end position="433"/>
    </location>
</feature>
<feature type="active site" description="Glycyl thioester intermediate">
    <location>
        <position position="876"/>
    </location>
</feature>
<feature type="splice variant" id="VSP_023829" description="In isoform 2." evidence="16">
    <location>
        <begin position="1"/>
        <end position="591"/>
    </location>
</feature>
<feature type="splice variant" id="VSP_023830" description="In isoform 3." evidence="14">
    <location>
        <begin position="1"/>
        <end position="357"/>
    </location>
</feature>
<feature type="splice variant" id="VSP_023831" description="In isoform 3." evidence="14">
    <original>K</original>
    <variation>MMFKKHFCFSQ</variation>
    <location>
        <position position="358"/>
    </location>
</feature>
<feature type="splice variant" id="VSP_042378" description="In isoform 4." evidence="15">
    <location>
        <begin position="523"/>
        <end position="737"/>
    </location>
</feature>
<feature type="sequence variant" id="VAR_031180" description="In dbSNP:rs17853353." evidence="5">
    <original>R</original>
    <variation>H</variation>
    <location>
        <position position="17"/>
    </location>
</feature>
<feature type="sequence variant" id="VAR_031181" description="In dbSNP:rs17857038." evidence="5">
    <original>I</original>
    <variation>T</variation>
    <location>
        <position position="374"/>
    </location>
</feature>
<feature type="sequence variant" id="VAR_076311" description="In SPPRS." evidence="11">
    <location>
        <position position="832"/>
    </location>
</feature>
<feature type="mutagenesis site" description="Exists as a mixture of monomer and dimer; promotes autoubiquitination and ubiquitination of RAC1." evidence="13">
    <original>L</original>
    <variation>A</variation>
    <variation>D</variation>
    <location>
        <position position="8"/>
    </location>
</feature>
<feature type="mutagenesis site" description="Exists as a mixture of monomer and dimer; promotes autoubiquitination and ubiquitination of RAC1." evidence="13">
    <original>L</original>
    <variation>A</variation>
    <location>
        <position position="11"/>
    </location>
</feature>
<feature type="mutagenesis site" description="Monomeric; promotes autoubiquitination and ubiquitination of RAC1." evidence="13">
    <original>L</original>
    <variation>D</variation>
    <location>
        <position position="11"/>
    </location>
</feature>
<feature type="mutagenesis site" description="Monomeric; promotes autoubiquitination and ubiquitination of RAC1." evidence="13">
    <original>S</original>
    <variation>E</variation>
    <location>
        <position position="14"/>
    </location>
</feature>
<feature type="mutagenesis site" description="Monomeric; promotes autoubiquitination and ubiquitination of RAC1." evidence="13">
    <original>L</original>
    <variation>A</variation>
    <variation>D</variation>
    <location>
        <position position="15"/>
    </location>
</feature>
<feature type="mutagenesis site" description="Monomeric; promotes autoubiquitination and ubiquitination of RAC1." evidence="13">
    <original>T</original>
    <variation>E</variation>
    <location>
        <position position="20"/>
    </location>
</feature>
<feature type="mutagenesis site" description="Promotes ubiquitination of RAC1." evidence="12">
    <original>V</original>
    <variation>A</variation>
    <location>
        <position position="140"/>
    </location>
</feature>
<feature type="mutagenesis site" description="Impairs ubiquitination of RAC1." evidence="12">
    <original>Q</original>
    <variation>A</variation>
    <location>
        <position position="173"/>
    </location>
</feature>
<feature type="mutagenesis site" description="Impairs ubiquitination of RAC1." evidence="12">
    <original>N</original>
    <variation>A</variation>
    <location>
        <position position="174"/>
    </location>
</feature>
<feature type="mutagenesis site" description="Impairs ubiquitination of RAC1." evidence="12">
    <original>G</original>
    <variation>S</variation>
    <location>
        <position position="175"/>
    </location>
</feature>
<feature type="mutagenesis site" description="Impairs ubiquitination of RAC1." evidence="12">
    <original>A</original>
    <variation>T</variation>
    <location>
        <position position="204"/>
    </location>
</feature>
<feature type="mutagenesis site" description="Promotes ubiquitination of RAC1." evidence="12">
    <original>R</original>
    <variation>A</variation>
    <location>
        <position position="332"/>
    </location>
</feature>
<feature type="mutagenesis site" description="Promotes ubiquitination of RAC1." evidence="12">
    <original>R</original>
    <variation>A</variation>
    <location>
        <position position="353"/>
    </location>
</feature>
<feature type="mutagenesis site" description="Monomeric; loss of E3 ubiquitin ligase activity." evidence="13">
    <original>I</original>
    <variation>D</variation>
    <location>
        <position position="694"/>
    </location>
</feature>
<feature type="mutagenesis site" description="Dimeric; loss of E3 ubiquitin ligase activity." evidence="13">
    <original>L</original>
    <variation>D</variation>
    <location>
        <position position="704"/>
    </location>
</feature>
<feature type="mutagenesis site" description="Monomeric; loss of E3 ubiquitin ligase activity." evidence="13">
    <original>L</original>
    <variation>D</variation>
    <location>
        <position position="706"/>
    </location>
</feature>
<feature type="mutagenesis site" description="Loss of E3 ubiquitin ligase activity." evidence="4 8 9">
    <original>C</original>
    <variation>A</variation>
    <variation>S</variation>
    <location>
        <position position="876"/>
    </location>
</feature>
<feature type="mutagenesis site" description="Abolishes ubiquitination of RAC1." evidence="12">
    <original>Y</original>
    <variation>A</variation>
    <location>
        <position position="906"/>
    </location>
</feature>
<feature type="mutagenesis site" description="Abolishes ubiquitination of RAC1." evidence="12">
    <location>
        <begin position="907"/>
        <end position="909"/>
    </location>
</feature>
<feature type="sequence conflict" description="In Ref. 3; BAG54751." evidence="19" ref="3">
    <original>L</original>
    <variation>P</variation>
    <location>
        <position position="132"/>
    </location>
</feature>
<feature type="sequence conflict" description="In Ref. 3; BAG54751." evidence="19" ref="3">
    <original>A</original>
    <variation>S</variation>
    <location>
        <position position="299"/>
    </location>
</feature>
<feature type="sequence conflict" description="In Ref. 3; BAH14462." evidence="19" ref="3">
    <original>G</original>
    <variation>E</variation>
    <location>
        <position position="581"/>
    </location>
</feature>
<feature type="sequence conflict" description="In Ref. 3; BAF84449." evidence="19" ref="3">
    <original>T</original>
    <variation>A</variation>
    <location>
        <position position="875"/>
    </location>
</feature>
<organism>
    <name type="scientific">Homo sapiens</name>
    <name type="common">Human</name>
    <dbReference type="NCBI Taxonomy" id="9606"/>
    <lineage>
        <taxon>Eukaryota</taxon>
        <taxon>Metazoa</taxon>
        <taxon>Chordata</taxon>
        <taxon>Craniata</taxon>
        <taxon>Vertebrata</taxon>
        <taxon>Euteleostomi</taxon>
        <taxon>Mammalia</taxon>
        <taxon>Eutheria</taxon>
        <taxon>Euarchontoglires</taxon>
        <taxon>Primates</taxon>
        <taxon>Haplorrhini</taxon>
        <taxon>Catarrhini</taxon>
        <taxon>Hominidae</taxon>
        <taxon>Homo</taxon>
    </lineage>
</organism>
<sequence length="909" mass="102342">MERAMEQLNRLTRSLRRARTVELPEDNETAVYTLMPMVMADQHRSVSELLSNSKFDVNYAFGRVKRSLLHIAANCGSVECLVLLLKKGANPNYQDISGCTPLHLAARNGQKKCMSKLLEYSADVNICNNEGLTAIHWLAVNGRTELLHDLVQHVSDVDVEDAMGQTALHVACQNGHKTTVQCLLDSGADINRPNVSGATPLYFACSHGQRDTAQILLLRGAKYLPDKNGVTPLDLCVQGGYGETCEVLIQYHPRLFQTIIQMTQNEDLRENMLRQVLEHLSQQSESQYLKILTSLAEVATTNGHKLLSLSSNYDAQMKSLLRIVRMFCHVFRIGPSSPSNGIDMGYNGNKTPRSQVFKPLELLWHSLDEWLVLIATELMKNKRDSTEITSILLKQKGQDQDAASIPPFEPPGPGSYENLSTGTRESKPDALAGRQEASADCQDVISMTANRLSAVIQAFYMCCSCQMPPGMTSPRFIEFVCKHDEVLKCFVNRNPKIIFDHFHFLLECPELMSRFMHIIKAQPFKDRCEWFYEHLHSGQPDSDMVHRPVNENDILLVHRDSIFRSSCEVVSKANCAKLKQGIAVRFHGEEGMGQGVVREWFDILSNEIVNPDYALFTQSADGTTFQPNSNSYVNPDHLNYFRFAGQILGLALNHRQLVNIYFTRSFYKHILGIPVNYQDVASIDPEYAKNLQWILDNDISDLGLELTFSVETDVFGAMEEVPLKPGGGSILVTQNNKAEYVQLVTELRMTRAIQPQINAFLQGFHMFIPPSLIQLFDEYELELLLSGMPEIDVSDWIKNTEYTSGYEREDPVIQWFWEVVEDITQEERVLLLQFVTGSSRVPHGGFANIMGGSGLQNFTIAAVPYTPNLLPTSSTCINMLKLPEYPSKEILKDRLLVALHCGSYGYTMA</sequence>
<protein>
    <recommendedName>
        <fullName>E3 ubiquitin-protein ligase HACE1</fullName>
        <ecNumber evidence="12 13">2.3.2.26</ecNumber>
    </recommendedName>
    <alternativeName>
        <fullName>HECT domain and ankyrin repeat-containing E3 ubiquitin-protein ligase 1</fullName>
    </alternativeName>
    <alternativeName>
        <fullName evidence="17 18">HECT-type E3 ubiquitin transferase HACE1</fullName>
    </alternativeName>
</protein>
<accession>Q8IYU2</accession>
<accession>A8K6U5</accession>
<accession>B3KY89</accession>
<accession>B4DFM6</accession>
<accession>B4DTQ4</accession>
<accession>B7Z9X6</accession>
<accession>E9PGP0</accession>
<accession>Q5VU99</accession>
<accession>Q5VUA0</accession>
<accession>Q8ND12</accession>
<accession>Q9P2M6</accession>
<proteinExistence type="evidence at protein level"/>
<gene>
    <name type="primary">HACE1</name>
    <name type="synonym">KIAA1320</name>
</gene>
<evidence type="ECO:0000250" key="1">
    <source>
        <dbReference type="UniProtKB" id="Q3U0D9"/>
    </source>
</evidence>
<evidence type="ECO:0000255" key="2">
    <source>
        <dbReference type="PROSITE-ProRule" id="PRU00104"/>
    </source>
</evidence>
<evidence type="ECO:0000256" key="3">
    <source>
        <dbReference type="SAM" id="MobiDB-lite"/>
    </source>
</evidence>
<evidence type="ECO:0000269" key="4">
    <source>
    </source>
</evidence>
<evidence type="ECO:0000269" key="5">
    <source>
    </source>
</evidence>
<evidence type="ECO:0000269" key="6">
    <source>
    </source>
</evidence>
<evidence type="ECO:0000269" key="7">
    <source>
    </source>
</evidence>
<evidence type="ECO:0000269" key="8">
    <source>
    </source>
</evidence>
<evidence type="ECO:0000269" key="9">
    <source>
    </source>
</evidence>
<evidence type="ECO:0000269" key="10">
    <source>
    </source>
</evidence>
<evidence type="ECO:0000269" key="11">
    <source>
    </source>
</evidence>
<evidence type="ECO:0000269" key="12">
    <source>
    </source>
</evidence>
<evidence type="ECO:0000269" key="13">
    <source>
    </source>
</evidence>
<evidence type="ECO:0000303" key="14">
    <source>
    </source>
</evidence>
<evidence type="ECO:0000303" key="15">
    <source>
    </source>
</evidence>
<evidence type="ECO:0000303" key="16">
    <source>
    </source>
</evidence>
<evidence type="ECO:0000303" key="17">
    <source>
    </source>
</evidence>
<evidence type="ECO:0000303" key="18">
    <source>
    </source>
</evidence>
<evidence type="ECO:0000305" key="19"/>
<evidence type="ECO:0007744" key="20">
    <source>
        <dbReference type="PDB" id="8H8X"/>
    </source>
</evidence>
<evidence type="ECO:0007744" key="21">
    <source>
        <dbReference type="PDB" id="8HAE"/>
    </source>
</evidence>
<evidence type="ECO:0007744" key="22">
    <source>
        <dbReference type="PDB" id="8PWL"/>
    </source>
</evidence>
<evidence type="ECO:0007744" key="23">
    <source>
        <dbReference type="PDB" id="8Q0N"/>
    </source>
</evidence>